<name>ENDOU_BOVIN</name>
<accession>A6QLQ8</accession>
<reference key="1">
    <citation type="submission" date="2007-06" db="EMBL/GenBank/DDBJ databases">
        <authorList>
            <consortium name="NIH - Mammalian Gene Collection (MGC) project"/>
        </authorList>
    </citation>
    <scope>NUCLEOTIDE SEQUENCE [LARGE SCALE MRNA]</scope>
    <source>
        <strain>Hereford</strain>
        <tissue>Fetal skin</tissue>
    </source>
</reference>
<evidence type="ECO:0000250" key="1">
    <source>
        <dbReference type="UniProtKB" id="P21128"/>
    </source>
</evidence>
<evidence type="ECO:0000255" key="2"/>
<evidence type="ECO:0000255" key="3">
    <source>
        <dbReference type="PROSITE-ProRule" id="PRU00350"/>
    </source>
</evidence>
<evidence type="ECO:0000255" key="4">
    <source>
        <dbReference type="PROSITE-ProRule" id="PRU01304"/>
    </source>
</evidence>
<evidence type="ECO:0000305" key="5"/>
<comment type="function">
    <text evidence="1">Endoribonuclease that cleaves single-stranded RNAs at 5' of uridylates and releases a product with a 2',3'-cyclic phosphate at the 3'-end. The UU and GU sites are more efficiently cleaved than CU and AU sites. Targets mRNAs to regulate their expression (By similarity).</text>
</comment>
<comment type="catalytic activity">
    <reaction evidence="1">
        <text>ribonucleotidyl-uridine-RNA = a 5'-end dephospho-uridine-RNA + a 3'-end 2',3'-cyclophospho-ribonucleotide-RNA</text>
        <dbReference type="Rhea" id="RHEA:67792"/>
        <dbReference type="Rhea" id="RHEA-COMP:10464"/>
        <dbReference type="Rhea" id="RHEA-COMP:17354"/>
        <dbReference type="Rhea" id="RHEA-COMP:17356"/>
        <dbReference type="ChEBI" id="CHEBI:83064"/>
        <dbReference type="ChEBI" id="CHEBI:173117"/>
        <dbReference type="ChEBI" id="CHEBI:173224"/>
    </reaction>
    <physiologicalReaction direction="left-to-right" evidence="1">
        <dbReference type="Rhea" id="RHEA:67793"/>
    </physiologicalReaction>
</comment>
<comment type="cofactor">
    <cofactor evidence="4">
        <name>Mn(2+)</name>
        <dbReference type="ChEBI" id="CHEBI:29035"/>
    </cofactor>
</comment>
<comment type="subunit">
    <text evidence="4">Monomer.</text>
</comment>
<comment type="subcellular location">
    <subcellularLocation>
        <location evidence="5">Secreted</location>
    </subcellularLocation>
</comment>
<comment type="similarity">
    <text evidence="4">Belongs to the ENDOU family.</text>
</comment>
<protein>
    <recommendedName>
        <fullName evidence="5">Uridylate-specific endoribonuclease</fullName>
        <ecNumber evidence="4">3.1.-.-</ecNumber>
        <ecNumber evidence="1">4.6.1.-</ecNumber>
    </recommendedName>
    <alternativeName>
        <fullName>Protein endoU</fullName>
    </alternativeName>
</protein>
<dbReference type="EC" id="3.1.-.-" evidence="4"/>
<dbReference type="EC" id="4.6.1.-" evidence="1"/>
<dbReference type="EMBL" id="BC148052">
    <property type="protein sequence ID" value="AAI48053.1"/>
    <property type="molecule type" value="mRNA"/>
</dbReference>
<dbReference type="RefSeq" id="NP_001095560.1">
    <property type="nucleotide sequence ID" value="NM_001102090.1"/>
</dbReference>
<dbReference type="SMR" id="A6QLQ8"/>
<dbReference type="FunCoup" id="A6QLQ8">
    <property type="interactions" value="11"/>
</dbReference>
<dbReference type="STRING" id="9913.ENSBTAP00000043168"/>
<dbReference type="PaxDb" id="9913-ENSBTAP00000043168"/>
<dbReference type="GeneID" id="525399"/>
<dbReference type="KEGG" id="bta:525399"/>
<dbReference type="CTD" id="8909"/>
<dbReference type="eggNOG" id="KOG2849">
    <property type="taxonomic scope" value="Eukaryota"/>
</dbReference>
<dbReference type="HOGENOM" id="CLU_048034_0_0_1"/>
<dbReference type="InParanoid" id="A6QLQ8"/>
<dbReference type="OrthoDB" id="430326at2759"/>
<dbReference type="TreeFam" id="TF319848"/>
<dbReference type="Proteomes" id="UP000009136">
    <property type="component" value="Unplaced"/>
</dbReference>
<dbReference type="GO" id="GO:0005576">
    <property type="term" value="C:extracellular region"/>
    <property type="evidence" value="ECO:0007669"/>
    <property type="project" value="UniProtKB-SubCell"/>
</dbReference>
<dbReference type="GO" id="GO:0016829">
    <property type="term" value="F:lyase activity"/>
    <property type="evidence" value="ECO:0007669"/>
    <property type="project" value="UniProtKB-KW"/>
</dbReference>
<dbReference type="GO" id="GO:0046872">
    <property type="term" value="F:metal ion binding"/>
    <property type="evidence" value="ECO:0007669"/>
    <property type="project" value="UniProtKB-KW"/>
</dbReference>
<dbReference type="GO" id="GO:0030247">
    <property type="term" value="F:polysaccharide binding"/>
    <property type="evidence" value="ECO:0007669"/>
    <property type="project" value="InterPro"/>
</dbReference>
<dbReference type="GO" id="GO:0003723">
    <property type="term" value="F:RNA binding"/>
    <property type="evidence" value="ECO:0000250"/>
    <property type="project" value="UniProtKB"/>
</dbReference>
<dbReference type="GO" id="GO:0004521">
    <property type="term" value="F:RNA endonuclease activity"/>
    <property type="evidence" value="ECO:0000250"/>
    <property type="project" value="UniProtKB"/>
</dbReference>
<dbReference type="GO" id="GO:0005044">
    <property type="term" value="F:scavenger receptor activity"/>
    <property type="evidence" value="ECO:0007669"/>
    <property type="project" value="InterPro"/>
</dbReference>
<dbReference type="GO" id="GO:0006955">
    <property type="term" value="P:immune response"/>
    <property type="evidence" value="ECO:0007669"/>
    <property type="project" value="InterPro"/>
</dbReference>
<dbReference type="CDD" id="cd21159">
    <property type="entry name" value="XendoU"/>
    <property type="match status" value="1"/>
</dbReference>
<dbReference type="FunFam" id="4.10.410.20:FF:000005">
    <property type="entry name" value="Endonuclease, poly(U) specific"/>
    <property type="match status" value="1"/>
</dbReference>
<dbReference type="FunFam" id="4.10.410.20:FF:000007">
    <property type="entry name" value="Poly(U)-specific endoribonuclease"/>
    <property type="match status" value="1"/>
</dbReference>
<dbReference type="Gene3D" id="4.10.410.20">
    <property type="match status" value="2"/>
</dbReference>
<dbReference type="InterPro" id="IPR039787">
    <property type="entry name" value="ENDOU"/>
</dbReference>
<dbReference type="InterPro" id="IPR037227">
    <property type="entry name" value="EndoU-like"/>
</dbReference>
<dbReference type="InterPro" id="IPR018998">
    <property type="entry name" value="EndoU_C"/>
</dbReference>
<dbReference type="InterPro" id="IPR020436">
    <property type="entry name" value="SMB_chordata"/>
</dbReference>
<dbReference type="InterPro" id="IPR036024">
    <property type="entry name" value="Somatomedin_B-like_dom_sf"/>
</dbReference>
<dbReference type="InterPro" id="IPR001212">
    <property type="entry name" value="Somatomedin_B_dom"/>
</dbReference>
<dbReference type="PANTHER" id="PTHR12439">
    <property type="entry name" value="PLACENTAL PROTEIN 11-RELATED"/>
    <property type="match status" value="1"/>
</dbReference>
<dbReference type="PANTHER" id="PTHR12439:SF40">
    <property type="entry name" value="URIDYLATE-SPECIFIC ENDORIBONUCLEASE"/>
    <property type="match status" value="1"/>
</dbReference>
<dbReference type="Pfam" id="PF01033">
    <property type="entry name" value="Somatomedin_B"/>
    <property type="match status" value="2"/>
</dbReference>
<dbReference type="Pfam" id="PF09412">
    <property type="entry name" value="XendoU"/>
    <property type="match status" value="1"/>
</dbReference>
<dbReference type="PRINTS" id="PR00022">
    <property type="entry name" value="SOMATOMEDINB"/>
</dbReference>
<dbReference type="SMART" id="SM00201">
    <property type="entry name" value="SO"/>
    <property type="match status" value="2"/>
</dbReference>
<dbReference type="SUPFAM" id="SSF142877">
    <property type="entry name" value="EndoU-like"/>
    <property type="match status" value="1"/>
</dbReference>
<dbReference type="SUPFAM" id="SSF90188">
    <property type="entry name" value="Somatomedin B domain"/>
    <property type="match status" value="2"/>
</dbReference>
<dbReference type="PROSITE" id="PS51959">
    <property type="entry name" value="ENDOU"/>
    <property type="match status" value="1"/>
</dbReference>
<dbReference type="PROSITE" id="PS00524">
    <property type="entry name" value="SMB_1"/>
    <property type="match status" value="2"/>
</dbReference>
<dbReference type="PROSITE" id="PS50958">
    <property type="entry name" value="SMB_2"/>
    <property type="match status" value="2"/>
</dbReference>
<gene>
    <name type="primary">ENDOU</name>
</gene>
<feature type="signal peptide" evidence="2">
    <location>
        <begin position="1"/>
        <end position="18"/>
    </location>
</feature>
<feature type="chain" id="PRO_0000394221" description="Uridylate-specific endoribonuclease" evidence="2">
    <location>
        <begin position="19"/>
        <end position="413"/>
    </location>
</feature>
<feature type="domain" description="SMB 1" evidence="3">
    <location>
        <begin position="20"/>
        <end position="63"/>
    </location>
</feature>
<feature type="domain" description="SMB 2" evidence="3">
    <location>
        <begin position="88"/>
        <end position="130"/>
    </location>
</feature>
<feature type="domain" description="EndoU" evidence="4">
    <location>
        <begin position="139"/>
        <end position="412"/>
    </location>
</feature>
<feature type="active site" evidence="4">
    <location>
        <position position="287"/>
    </location>
</feature>
<feature type="active site" evidence="4">
    <location>
        <position position="302"/>
    </location>
</feature>
<feature type="active site" evidence="4">
    <location>
        <position position="345"/>
    </location>
</feature>
<feature type="disulfide bond" description="Alternate" evidence="3">
    <location>
        <begin position="24"/>
        <end position="40"/>
    </location>
</feature>
<feature type="disulfide bond" description="Alternate" evidence="3">
    <location>
        <begin position="24"/>
        <end position="28"/>
    </location>
</feature>
<feature type="disulfide bond" description="Alternate" evidence="3">
    <location>
        <begin position="28"/>
        <end position="58"/>
    </location>
</feature>
<feature type="disulfide bond" description="Alternate" evidence="3">
    <location>
        <begin position="38"/>
        <end position="51"/>
    </location>
</feature>
<feature type="disulfide bond" description="Alternate" evidence="3">
    <location>
        <begin position="38"/>
        <end position="40"/>
    </location>
</feature>
<feature type="disulfide bond" evidence="3">
    <location>
        <begin position="44"/>
        <end position="50"/>
    </location>
</feature>
<feature type="disulfide bond" description="Alternate" evidence="3">
    <location>
        <begin position="51"/>
        <end position="58"/>
    </location>
</feature>
<feature type="disulfide bond" description="Alternate" evidence="3">
    <location>
        <begin position="92"/>
        <end position="108"/>
    </location>
</feature>
<feature type="disulfide bond" description="Alternate" evidence="3">
    <location>
        <begin position="92"/>
        <end position="96"/>
    </location>
</feature>
<feature type="disulfide bond" description="Alternate" evidence="3">
    <location>
        <begin position="96"/>
        <end position="126"/>
    </location>
</feature>
<feature type="disulfide bond" description="Alternate" evidence="3">
    <location>
        <begin position="106"/>
        <end position="119"/>
    </location>
</feature>
<feature type="disulfide bond" description="Alternate" evidence="3">
    <location>
        <begin position="106"/>
        <end position="108"/>
    </location>
</feature>
<feature type="disulfide bond" evidence="3">
    <location>
        <begin position="112"/>
        <end position="118"/>
    </location>
</feature>
<feature type="disulfide bond" description="Alternate" evidence="3">
    <location>
        <begin position="119"/>
        <end position="126"/>
    </location>
</feature>
<sequence>MRACVPLTVAILCGLAWAGKRESCASRCNERFDRDAVCQCDRRCPQHGDCCEDYEQLCTAEENPKEPELFLELEEETEGAPASSLYLAPNSCQGRCLEAFDKHHSCHCNARCPEFGNCCEDFESLCGHEGFSHSSDAITKEELQSVSEKIYRADTNKARKEDIVLNSQNCISPSETRDQVDRCPEPLFTYVNEKLFSKPTYSAFLNLLNNYQRATGRGEHFTAQELAEQDTFLREIMKTAVMKELYGFLHQQNRYSSEQEFVSDLKNMWFGLYSRSKEERDSSGFEHVFSGEVKKGKVTGFHNWIRFYMQEKEGLVDYYSHIYDGPWDSYPDVLAMQFNWDGYYKEVGSAFIGSSPEFEFALYSLCFIARPGKVCQLSLGGHPLAIQTYTWNKSTYGNGKKYIATAYVVSSTH</sequence>
<organism>
    <name type="scientific">Bos taurus</name>
    <name type="common">Bovine</name>
    <dbReference type="NCBI Taxonomy" id="9913"/>
    <lineage>
        <taxon>Eukaryota</taxon>
        <taxon>Metazoa</taxon>
        <taxon>Chordata</taxon>
        <taxon>Craniata</taxon>
        <taxon>Vertebrata</taxon>
        <taxon>Euteleostomi</taxon>
        <taxon>Mammalia</taxon>
        <taxon>Eutheria</taxon>
        <taxon>Laurasiatheria</taxon>
        <taxon>Artiodactyla</taxon>
        <taxon>Ruminantia</taxon>
        <taxon>Pecora</taxon>
        <taxon>Bovidae</taxon>
        <taxon>Bovinae</taxon>
        <taxon>Bos</taxon>
    </lineage>
</organism>
<proteinExistence type="evidence at transcript level"/>
<keyword id="KW-1015">Disulfide bond</keyword>
<keyword id="KW-0255">Endonuclease</keyword>
<keyword id="KW-0378">Hydrolase</keyword>
<keyword id="KW-0456">Lyase</keyword>
<keyword id="KW-0464">Manganese</keyword>
<keyword id="KW-0479">Metal-binding</keyword>
<keyword id="KW-0540">Nuclease</keyword>
<keyword id="KW-1185">Reference proteome</keyword>
<keyword id="KW-0677">Repeat</keyword>
<keyword id="KW-0694">RNA-binding</keyword>
<keyword id="KW-0964">Secreted</keyword>
<keyword id="KW-0732">Signal</keyword>